<name>CG1C_SCHPO</name>
<proteinExistence type="evidence at protein level"/>
<gene>
    <name type="primary">pch1</name>
    <name type="ORF">SPBC32F12.06</name>
</gene>
<keyword id="KW-0131">Cell cycle</keyword>
<keyword id="KW-0132">Cell division</keyword>
<keyword id="KW-0195">Cyclin</keyword>
<keyword id="KW-0539">Nucleus</keyword>
<keyword id="KW-0597">Phosphoprotein</keyword>
<keyword id="KW-1185">Reference proteome</keyword>
<accession>O74627</accession>
<accession>P87075</accession>
<feature type="chain" id="PRO_0000080426" description="Cyclin pch1">
    <location>
        <begin position="1"/>
        <end position="342"/>
    </location>
</feature>
<feature type="region of interest" description="Disordered" evidence="2">
    <location>
        <begin position="261"/>
        <end position="342"/>
    </location>
</feature>
<feature type="compositionally biased region" description="Polar residues" evidence="2">
    <location>
        <begin position="278"/>
        <end position="314"/>
    </location>
</feature>
<feature type="compositionally biased region" description="Basic and acidic residues" evidence="2">
    <location>
        <begin position="329"/>
        <end position="342"/>
    </location>
</feature>
<feature type="modified residue" description="Phosphothreonine" evidence="4">
    <location>
        <position position="300"/>
    </location>
</feature>
<feature type="modified residue" description="Phosphoserine" evidence="4">
    <location>
        <position position="302"/>
    </location>
</feature>
<feature type="sequence conflict" description="In Ref. 1; AAB53219." evidence="6" ref="1">
    <original>V</original>
    <variation>G</variation>
    <location>
        <position position="157"/>
    </location>
</feature>
<evidence type="ECO:0000250" key="1"/>
<evidence type="ECO:0000256" key="2">
    <source>
        <dbReference type="SAM" id="MobiDB-lite"/>
    </source>
</evidence>
<evidence type="ECO:0000269" key="3">
    <source>
    </source>
</evidence>
<evidence type="ECO:0000269" key="4">
    <source>
    </source>
</evidence>
<evidence type="ECO:0000269" key="5">
    <source>
    </source>
</evidence>
<evidence type="ECO:0000305" key="6"/>
<sequence length="342" mass="38286">MSEVIKSVPPGSQNTSQWIISKDQLVFTPSALDGIPLDQEEIQRSKGCNFIINVGLRLKLPQTALATANIYFHRFYLRFSLKNYHYYEVAATCIFLATKVEDSVRKLRDIVINCAKVAQKNSNVLVDEQTKEYWRWRDVILYTEEVLLEALCFDFTVEHPYPYVLSFIKKFVADDKNVTKVAWTYINDSTRSIACLLYSPKTIAAAAFQFALEKNEINLSTTTDGLPVWMEESQVSYEDVKGVLTLIDSLYKKINPSKQALPIDQKNGSHASSVAPGTPSSLASVSTQATPQHQNSSGRTDSFHSLNTETPSKSTVDDQILSTAAQPKKSSDTDKEMETEAS</sequence>
<comment type="function">
    <text evidence="5">Essential for progression through the whole cell cycle.</text>
</comment>
<comment type="subunit">
    <text evidence="3 5">Interacts with cdc2 protein kinase and with the N-terminal domain of cdk9.</text>
</comment>
<comment type="interaction">
    <interactant intactId="EBI-443575">
        <id>O74627</id>
    </interactant>
    <interactant intactId="EBI-1187862">
        <id>P04551</id>
        <label>cdc2</label>
    </interactant>
    <organismsDiffer>false</organismsDiffer>
    <experiments>2</experiments>
</comment>
<comment type="interaction">
    <interactant intactId="EBI-443575">
        <id>O74627</id>
    </interactant>
    <interactant intactId="EBI-443557">
        <id>Q96WV9</id>
        <label>cdk9</label>
    </interactant>
    <organismsDiffer>false</organismsDiffer>
    <experiments>2</experiments>
</comment>
<comment type="interaction">
    <interactant intactId="EBI-443575">
        <id>O74627</id>
    </interactant>
    <interactant intactId="EBI-7296037">
        <id>O74880</id>
        <label>pcm1</label>
    </interactant>
    <organismsDiffer>false</organismsDiffer>
    <experiments>2</experiments>
</comment>
<comment type="subcellular location">
    <subcellularLocation>
        <location evidence="1">Nucleus</location>
    </subcellularLocation>
</comment>
<comment type="similarity">
    <text evidence="6">Belongs to the cyclin family. Cyclin C subfamily.</text>
</comment>
<dbReference type="EMBL" id="U92879">
    <property type="protein sequence ID" value="AAB53219.1"/>
    <property type="molecule type" value="Genomic_DNA"/>
</dbReference>
<dbReference type="EMBL" id="CU329671">
    <property type="protein sequence ID" value="CAA19367.1"/>
    <property type="molecule type" value="Genomic_DNA"/>
</dbReference>
<dbReference type="PIR" id="T40230">
    <property type="entry name" value="T40230"/>
</dbReference>
<dbReference type="RefSeq" id="NP_596149.1">
    <property type="nucleotide sequence ID" value="NM_001022068.2"/>
</dbReference>
<dbReference type="SMR" id="O74627"/>
<dbReference type="BioGRID" id="276769">
    <property type="interactions" value="10"/>
</dbReference>
<dbReference type="FunCoup" id="O74627">
    <property type="interactions" value="626"/>
</dbReference>
<dbReference type="IntAct" id="O74627">
    <property type="interactions" value="3"/>
</dbReference>
<dbReference type="MINT" id="O74627"/>
<dbReference type="STRING" id="284812.O74627"/>
<dbReference type="iPTMnet" id="O74627"/>
<dbReference type="PaxDb" id="4896-SPBC32F12.06.1"/>
<dbReference type="EnsemblFungi" id="SPBC32F12.06.1">
    <property type="protein sequence ID" value="SPBC32F12.06.1:pep"/>
    <property type="gene ID" value="SPBC32F12.06"/>
</dbReference>
<dbReference type="PomBase" id="SPBC32F12.06">
    <property type="gene designation" value="pch1"/>
</dbReference>
<dbReference type="VEuPathDB" id="FungiDB:SPBC32F12.06"/>
<dbReference type="eggNOG" id="KOG0834">
    <property type="taxonomic scope" value="Eukaryota"/>
</dbReference>
<dbReference type="HOGENOM" id="CLU_022000_7_0_1"/>
<dbReference type="InParanoid" id="O74627"/>
<dbReference type="OMA" id="PTMHHIG"/>
<dbReference type="PhylomeDB" id="O74627"/>
<dbReference type="Reactome" id="R-SPO-674695">
    <property type="pathway name" value="RNA Polymerase II Pre-transcription Events"/>
</dbReference>
<dbReference type="Reactome" id="R-SPO-6796648">
    <property type="pathway name" value="TP53 Regulates Transcription of DNA Repair Genes"/>
</dbReference>
<dbReference type="Reactome" id="R-SPO-6807505">
    <property type="pathway name" value="RNA polymerase II transcribes snRNA genes"/>
</dbReference>
<dbReference type="Reactome" id="R-SPO-9018519">
    <property type="pathway name" value="Estrogen-dependent gene expression"/>
</dbReference>
<dbReference type="PRO" id="PR:O74627"/>
<dbReference type="Proteomes" id="UP000002485">
    <property type="component" value="Chromosome II"/>
</dbReference>
<dbReference type="GO" id="GO:0000307">
    <property type="term" value="C:cyclin-dependent protein kinase holoenzyme complex"/>
    <property type="evidence" value="ECO:0000314"/>
    <property type="project" value="PomBase"/>
</dbReference>
<dbReference type="GO" id="GO:0008024">
    <property type="term" value="C:cyclin/CDK positive transcription elongation factor complex"/>
    <property type="evidence" value="ECO:0000318"/>
    <property type="project" value="GO_Central"/>
</dbReference>
<dbReference type="GO" id="GO:0005829">
    <property type="term" value="C:cytosol"/>
    <property type="evidence" value="ECO:0007005"/>
    <property type="project" value="PomBase"/>
</dbReference>
<dbReference type="GO" id="GO:0005634">
    <property type="term" value="C:nucleus"/>
    <property type="evidence" value="ECO:0007005"/>
    <property type="project" value="PomBase"/>
</dbReference>
<dbReference type="GO" id="GO:0070691">
    <property type="term" value="C:P-TEFb complex"/>
    <property type="evidence" value="ECO:0000353"/>
    <property type="project" value="PomBase"/>
</dbReference>
<dbReference type="GO" id="GO:0061575">
    <property type="term" value="F:cyclin-dependent protein serine/threonine kinase activator activity"/>
    <property type="evidence" value="ECO:0000269"/>
    <property type="project" value="PomBase"/>
</dbReference>
<dbReference type="GO" id="GO:0051301">
    <property type="term" value="P:cell division"/>
    <property type="evidence" value="ECO:0007669"/>
    <property type="project" value="UniProtKB-KW"/>
</dbReference>
<dbReference type="GO" id="GO:0032786">
    <property type="term" value="P:positive regulation of DNA-templated transcription, elongation"/>
    <property type="evidence" value="ECO:0000318"/>
    <property type="project" value="GO_Central"/>
</dbReference>
<dbReference type="GO" id="GO:0045944">
    <property type="term" value="P:positive regulation of transcription by RNA polymerase II"/>
    <property type="evidence" value="ECO:0000318"/>
    <property type="project" value="GO_Central"/>
</dbReference>
<dbReference type="GO" id="GO:0023052">
    <property type="term" value="P:signaling"/>
    <property type="evidence" value="ECO:0000303"/>
    <property type="project" value="PomBase"/>
</dbReference>
<dbReference type="CDD" id="cd20545">
    <property type="entry name" value="CYCLIN_SpCG1C-like_rpt1"/>
    <property type="match status" value="1"/>
</dbReference>
<dbReference type="CDD" id="cd20546">
    <property type="entry name" value="CYCLIN_SpCG1C_ScCTK2-like_rpt2"/>
    <property type="match status" value="1"/>
</dbReference>
<dbReference type="FunFam" id="1.10.472.10:FF:000072">
    <property type="entry name" value="Cyclin Pch1"/>
    <property type="match status" value="1"/>
</dbReference>
<dbReference type="Gene3D" id="1.10.472.10">
    <property type="entry name" value="Cyclin-like"/>
    <property type="match status" value="2"/>
</dbReference>
<dbReference type="InterPro" id="IPR013763">
    <property type="entry name" value="Cyclin-like_dom"/>
</dbReference>
<dbReference type="InterPro" id="IPR036915">
    <property type="entry name" value="Cyclin-like_sf"/>
</dbReference>
<dbReference type="InterPro" id="IPR043198">
    <property type="entry name" value="Cyclin/Ssn8"/>
</dbReference>
<dbReference type="InterPro" id="IPR004367">
    <property type="entry name" value="Cyclin_C-dom"/>
</dbReference>
<dbReference type="InterPro" id="IPR006671">
    <property type="entry name" value="Cyclin_N"/>
</dbReference>
<dbReference type="PANTHER" id="PTHR10026">
    <property type="entry name" value="CYCLIN"/>
    <property type="match status" value="1"/>
</dbReference>
<dbReference type="Pfam" id="PF02984">
    <property type="entry name" value="Cyclin_C"/>
    <property type="match status" value="1"/>
</dbReference>
<dbReference type="Pfam" id="PF00134">
    <property type="entry name" value="Cyclin_N"/>
    <property type="match status" value="1"/>
</dbReference>
<dbReference type="PIRSF" id="PIRSF036580">
    <property type="entry name" value="Cyclin_L"/>
    <property type="match status" value="1"/>
</dbReference>
<dbReference type="SMART" id="SM00385">
    <property type="entry name" value="CYCLIN"/>
    <property type="match status" value="1"/>
</dbReference>
<dbReference type="SUPFAM" id="SSF47954">
    <property type="entry name" value="Cyclin-like"/>
    <property type="match status" value="2"/>
</dbReference>
<reference key="1">
    <citation type="journal article" date="1997" name="J. Biol. Chem.">
        <title>pch1(+), a second essential C-type cyclin gene in Schizosaccharomyces pombe.</title>
        <authorList>
            <person name="Furnari B.A."/>
            <person name="Russell P."/>
            <person name="Leatherwood J."/>
        </authorList>
    </citation>
    <scope>NUCLEOTIDE SEQUENCE [GENOMIC DNA]</scope>
    <scope>FUNCTION</scope>
    <scope>INTERACTION WITH CDC2</scope>
</reference>
<reference key="2">
    <citation type="journal article" date="2002" name="Nature">
        <title>The genome sequence of Schizosaccharomyces pombe.</title>
        <authorList>
            <person name="Wood V."/>
            <person name="Gwilliam R."/>
            <person name="Rajandream M.A."/>
            <person name="Lyne M.H."/>
            <person name="Lyne R."/>
            <person name="Stewart A."/>
            <person name="Sgouros J.G."/>
            <person name="Peat N."/>
            <person name="Hayles J."/>
            <person name="Baker S.G."/>
            <person name="Basham D."/>
            <person name="Bowman S."/>
            <person name="Brooks K."/>
            <person name="Brown D."/>
            <person name="Brown S."/>
            <person name="Chillingworth T."/>
            <person name="Churcher C.M."/>
            <person name="Collins M."/>
            <person name="Connor R."/>
            <person name="Cronin A."/>
            <person name="Davis P."/>
            <person name="Feltwell T."/>
            <person name="Fraser A."/>
            <person name="Gentles S."/>
            <person name="Goble A."/>
            <person name="Hamlin N."/>
            <person name="Harris D.E."/>
            <person name="Hidalgo J."/>
            <person name="Hodgson G."/>
            <person name="Holroyd S."/>
            <person name="Hornsby T."/>
            <person name="Howarth S."/>
            <person name="Huckle E.J."/>
            <person name="Hunt S."/>
            <person name="Jagels K."/>
            <person name="James K.D."/>
            <person name="Jones L."/>
            <person name="Jones M."/>
            <person name="Leather S."/>
            <person name="McDonald S."/>
            <person name="McLean J."/>
            <person name="Mooney P."/>
            <person name="Moule S."/>
            <person name="Mungall K.L."/>
            <person name="Murphy L.D."/>
            <person name="Niblett D."/>
            <person name="Odell C."/>
            <person name="Oliver K."/>
            <person name="O'Neil S."/>
            <person name="Pearson D."/>
            <person name="Quail M.A."/>
            <person name="Rabbinowitsch E."/>
            <person name="Rutherford K.M."/>
            <person name="Rutter S."/>
            <person name="Saunders D."/>
            <person name="Seeger K."/>
            <person name="Sharp S."/>
            <person name="Skelton J."/>
            <person name="Simmonds M.N."/>
            <person name="Squares R."/>
            <person name="Squares S."/>
            <person name="Stevens K."/>
            <person name="Taylor K."/>
            <person name="Taylor R.G."/>
            <person name="Tivey A."/>
            <person name="Walsh S.V."/>
            <person name="Warren T."/>
            <person name="Whitehead S."/>
            <person name="Woodward J.R."/>
            <person name="Volckaert G."/>
            <person name="Aert R."/>
            <person name="Robben J."/>
            <person name="Grymonprez B."/>
            <person name="Weltjens I."/>
            <person name="Vanstreels E."/>
            <person name="Rieger M."/>
            <person name="Schaefer M."/>
            <person name="Mueller-Auer S."/>
            <person name="Gabel C."/>
            <person name="Fuchs M."/>
            <person name="Duesterhoeft A."/>
            <person name="Fritzc C."/>
            <person name="Holzer E."/>
            <person name="Moestl D."/>
            <person name="Hilbert H."/>
            <person name="Borzym K."/>
            <person name="Langer I."/>
            <person name="Beck A."/>
            <person name="Lehrach H."/>
            <person name="Reinhardt R."/>
            <person name="Pohl T.M."/>
            <person name="Eger P."/>
            <person name="Zimmermann W."/>
            <person name="Wedler H."/>
            <person name="Wambutt R."/>
            <person name="Purnelle B."/>
            <person name="Goffeau A."/>
            <person name="Cadieu E."/>
            <person name="Dreano S."/>
            <person name="Gloux S."/>
            <person name="Lelaure V."/>
            <person name="Mottier S."/>
            <person name="Galibert F."/>
            <person name="Aves S.J."/>
            <person name="Xiang Z."/>
            <person name="Hunt C."/>
            <person name="Moore K."/>
            <person name="Hurst S.M."/>
            <person name="Lucas M."/>
            <person name="Rochet M."/>
            <person name="Gaillardin C."/>
            <person name="Tallada V.A."/>
            <person name="Garzon A."/>
            <person name="Thode G."/>
            <person name="Daga R.R."/>
            <person name="Cruzado L."/>
            <person name="Jimenez J."/>
            <person name="Sanchez M."/>
            <person name="del Rey F."/>
            <person name="Benito J."/>
            <person name="Dominguez A."/>
            <person name="Revuelta J.L."/>
            <person name="Moreno S."/>
            <person name="Armstrong J."/>
            <person name="Forsburg S.L."/>
            <person name="Cerutti L."/>
            <person name="Lowe T."/>
            <person name="McCombie W.R."/>
            <person name="Paulsen I."/>
            <person name="Potashkin J."/>
            <person name="Shpakovski G.V."/>
            <person name="Ussery D."/>
            <person name="Barrell B.G."/>
            <person name="Nurse P."/>
        </authorList>
    </citation>
    <scope>NUCLEOTIDE SEQUENCE [LARGE SCALE GENOMIC DNA]</scope>
    <source>
        <strain>972 / ATCC 24843</strain>
    </source>
</reference>
<reference key="3">
    <citation type="journal article" date="2003" name="J. Biol. Chem.">
        <title>Interactions between fission yeast Cdk9, its cyclin partner Pch1, and mRNA capping enzyme Pct1 suggest an elongation checkpoint for mRNA quality control.</title>
        <authorList>
            <person name="Pei Y."/>
            <person name="Schwer B."/>
            <person name="Shuman S."/>
        </authorList>
    </citation>
    <scope>INTERACTION WITH CDK9</scope>
</reference>
<reference key="4">
    <citation type="journal article" date="2008" name="J. Proteome Res.">
        <title>Phosphoproteome analysis of fission yeast.</title>
        <authorList>
            <person name="Wilson-Grady J.T."/>
            <person name="Villen J."/>
            <person name="Gygi S.P."/>
        </authorList>
    </citation>
    <scope>PHOSPHORYLATION [LARGE SCALE ANALYSIS] AT THR-300 AND SER-302</scope>
    <scope>IDENTIFICATION BY MASS SPECTROMETRY</scope>
</reference>
<organism>
    <name type="scientific">Schizosaccharomyces pombe (strain 972 / ATCC 24843)</name>
    <name type="common">Fission yeast</name>
    <dbReference type="NCBI Taxonomy" id="284812"/>
    <lineage>
        <taxon>Eukaryota</taxon>
        <taxon>Fungi</taxon>
        <taxon>Dikarya</taxon>
        <taxon>Ascomycota</taxon>
        <taxon>Taphrinomycotina</taxon>
        <taxon>Schizosaccharomycetes</taxon>
        <taxon>Schizosaccharomycetales</taxon>
        <taxon>Schizosaccharomycetaceae</taxon>
        <taxon>Schizosaccharomyces</taxon>
    </lineage>
</organism>
<protein>
    <recommendedName>
        <fullName>Cyclin pch1</fullName>
    </recommendedName>
    <alternativeName>
        <fullName>Pombe cyclin C homolog 1</fullName>
    </alternativeName>
</protein>